<dbReference type="EC" id="7.1.1.-" evidence="1"/>
<dbReference type="EMBL" id="CP000572">
    <property type="protein sequence ID" value="ABN89285.1"/>
    <property type="molecule type" value="Genomic_DNA"/>
</dbReference>
<dbReference type="RefSeq" id="WP_004186558.1">
    <property type="nucleotide sequence ID" value="NC_009076.1"/>
</dbReference>
<dbReference type="SMR" id="A3NTB4"/>
<dbReference type="GeneID" id="93059702"/>
<dbReference type="KEGG" id="bpl:BURPS1106A_1307"/>
<dbReference type="HOGENOM" id="CLU_067218_5_1_4"/>
<dbReference type="Proteomes" id="UP000006738">
    <property type="component" value="Chromosome I"/>
</dbReference>
<dbReference type="GO" id="GO:0005886">
    <property type="term" value="C:plasma membrane"/>
    <property type="evidence" value="ECO:0007669"/>
    <property type="project" value="UniProtKB-SubCell"/>
</dbReference>
<dbReference type="GO" id="GO:0051539">
    <property type="term" value="F:4 iron, 4 sulfur cluster binding"/>
    <property type="evidence" value="ECO:0007669"/>
    <property type="project" value="UniProtKB-KW"/>
</dbReference>
<dbReference type="GO" id="GO:0005506">
    <property type="term" value="F:iron ion binding"/>
    <property type="evidence" value="ECO:0007669"/>
    <property type="project" value="UniProtKB-UniRule"/>
</dbReference>
<dbReference type="GO" id="GO:0050136">
    <property type="term" value="F:NADH:ubiquinone reductase (non-electrogenic) activity"/>
    <property type="evidence" value="ECO:0007669"/>
    <property type="project" value="UniProtKB-UniRule"/>
</dbReference>
<dbReference type="GO" id="GO:0048038">
    <property type="term" value="F:quinone binding"/>
    <property type="evidence" value="ECO:0007669"/>
    <property type="project" value="UniProtKB-KW"/>
</dbReference>
<dbReference type="GO" id="GO:0009060">
    <property type="term" value="P:aerobic respiration"/>
    <property type="evidence" value="ECO:0007669"/>
    <property type="project" value="TreeGrafter"/>
</dbReference>
<dbReference type="FunFam" id="3.30.70.3270:FF:000003">
    <property type="entry name" value="NADH-quinone oxidoreductase subunit I"/>
    <property type="match status" value="1"/>
</dbReference>
<dbReference type="Gene3D" id="3.30.70.3270">
    <property type="match status" value="1"/>
</dbReference>
<dbReference type="HAMAP" id="MF_01351">
    <property type="entry name" value="NDH1_NuoI"/>
    <property type="match status" value="1"/>
</dbReference>
<dbReference type="InterPro" id="IPR017896">
    <property type="entry name" value="4Fe4S_Fe-S-bd"/>
</dbReference>
<dbReference type="InterPro" id="IPR017900">
    <property type="entry name" value="4Fe4S_Fe_S_CS"/>
</dbReference>
<dbReference type="InterPro" id="IPR010226">
    <property type="entry name" value="NADH_quinone_OxRdtase_chainI"/>
</dbReference>
<dbReference type="NCBIfam" id="TIGR01971">
    <property type="entry name" value="NuoI"/>
    <property type="match status" value="1"/>
</dbReference>
<dbReference type="NCBIfam" id="NF004538">
    <property type="entry name" value="PRK05888.1-4"/>
    <property type="match status" value="1"/>
</dbReference>
<dbReference type="NCBIfam" id="NF004539">
    <property type="entry name" value="PRK05888.1-5"/>
    <property type="match status" value="1"/>
</dbReference>
<dbReference type="PANTHER" id="PTHR10849:SF20">
    <property type="entry name" value="NADH DEHYDROGENASE [UBIQUINONE] IRON-SULFUR PROTEIN 8, MITOCHONDRIAL"/>
    <property type="match status" value="1"/>
</dbReference>
<dbReference type="PANTHER" id="PTHR10849">
    <property type="entry name" value="NADH DEHYDROGENASE UBIQUINONE IRON-SULFUR PROTEIN 8, MITOCHONDRIAL"/>
    <property type="match status" value="1"/>
</dbReference>
<dbReference type="Pfam" id="PF12838">
    <property type="entry name" value="Fer4_7"/>
    <property type="match status" value="1"/>
</dbReference>
<dbReference type="SUPFAM" id="SSF54862">
    <property type="entry name" value="4Fe-4S ferredoxins"/>
    <property type="match status" value="1"/>
</dbReference>
<dbReference type="PROSITE" id="PS00198">
    <property type="entry name" value="4FE4S_FER_1"/>
    <property type="match status" value="2"/>
</dbReference>
<dbReference type="PROSITE" id="PS51379">
    <property type="entry name" value="4FE4S_FER_2"/>
    <property type="match status" value="2"/>
</dbReference>
<sequence>MTAIQQFFKTFFLTELLKGLALTGRYTFKRKFTVQFPEEKTPISPRFRGLHALRRYENGEERCIACKLCEAVCPALAITIESETRADNTRRTTRYDIDLTKCIFCGFCEESCPVDSIVETQILEYHGEKRGDLYFTKDMLLAVGDRYEKEIAAAKAADARYR</sequence>
<reference key="1">
    <citation type="journal article" date="2010" name="Genome Biol. Evol.">
        <title>Continuing evolution of Burkholderia mallei through genome reduction and large-scale rearrangements.</title>
        <authorList>
            <person name="Losada L."/>
            <person name="Ronning C.M."/>
            <person name="DeShazer D."/>
            <person name="Woods D."/>
            <person name="Fedorova N."/>
            <person name="Kim H.S."/>
            <person name="Shabalina S.A."/>
            <person name="Pearson T.R."/>
            <person name="Brinkac L."/>
            <person name="Tan P."/>
            <person name="Nandi T."/>
            <person name="Crabtree J."/>
            <person name="Badger J."/>
            <person name="Beckstrom-Sternberg S."/>
            <person name="Saqib M."/>
            <person name="Schutzer S.E."/>
            <person name="Keim P."/>
            <person name="Nierman W.C."/>
        </authorList>
    </citation>
    <scope>NUCLEOTIDE SEQUENCE [LARGE SCALE GENOMIC DNA]</scope>
    <source>
        <strain>1106a</strain>
    </source>
</reference>
<keyword id="KW-0004">4Fe-4S</keyword>
<keyword id="KW-0997">Cell inner membrane</keyword>
<keyword id="KW-1003">Cell membrane</keyword>
<keyword id="KW-0408">Iron</keyword>
<keyword id="KW-0411">Iron-sulfur</keyword>
<keyword id="KW-0472">Membrane</keyword>
<keyword id="KW-0479">Metal-binding</keyword>
<keyword id="KW-0520">NAD</keyword>
<keyword id="KW-0874">Quinone</keyword>
<keyword id="KW-0677">Repeat</keyword>
<keyword id="KW-1278">Translocase</keyword>
<keyword id="KW-0830">Ubiquinone</keyword>
<accession>A3NTB4</accession>
<comment type="function">
    <text evidence="1">NDH-1 shuttles electrons from NADH, via FMN and iron-sulfur (Fe-S) centers, to quinones in the respiratory chain. The immediate electron acceptor for the enzyme in this species is believed to be ubiquinone. Couples the redox reaction to proton translocation (for every two electrons transferred, four hydrogen ions are translocated across the cytoplasmic membrane), and thus conserves the redox energy in a proton gradient.</text>
</comment>
<comment type="catalytic activity">
    <reaction evidence="1">
        <text>a quinone + NADH + 5 H(+)(in) = a quinol + NAD(+) + 4 H(+)(out)</text>
        <dbReference type="Rhea" id="RHEA:57888"/>
        <dbReference type="ChEBI" id="CHEBI:15378"/>
        <dbReference type="ChEBI" id="CHEBI:24646"/>
        <dbReference type="ChEBI" id="CHEBI:57540"/>
        <dbReference type="ChEBI" id="CHEBI:57945"/>
        <dbReference type="ChEBI" id="CHEBI:132124"/>
    </reaction>
</comment>
<comment type="cofactor">
    <cofactor evidence="1">
        <name>[4Fe-4S] cluster</name>
        <dbReference type="ChEBI" id="CHEBI:49883"/>
    </cofactor>
    <text evidence="1">Binds 2 [4Fe-4S] clusters per subunit.</text>
</comment>
<comment type="subunit">
    <text evidence="1">NDH-1 is composed of 14 different subunits. Subunits NuoA, H, J, K, L, M, N constitute the membrane sector of the complex.</text>
</comment>
<comment type="subcellular location">
    <subcellularLocation>
        <location evidence="1">Cell inner membrane</location>
        <topology evidence="1">Peripheral membrane protein</topology>
    </subcellularLocation>
</comment>
<comment type="similarity">
    <text evidence="1">Belongs to the complex I 23 kDa subunit family.</text>
</comment>
<evidence type="ECO:0000255" key="1">
    <source>
        <dbReference type="HAMAP-Rule" id="MF_01351"/>
    </source>
</evidence>
<protein>
    <recommendedName>
        <fullName evidence="1">NADH-quinone oxidoreductase subunit I</fullName>
        <ecNumber evidence="1">7.1.1.-</ecNumber>
    </recommendedName>
    <alternativeName>
        <fullName evidence="1">NADH dehydrogenase I subunit I</fullName>
    </alternativeName>
    <alternativeName>
        <fullName evidence="1">NDH-1 subunit I</fullName>
    </alternativeName>
</protein>
<feature type="chain" id="PRO_0000298487" description="NADH-quinone oxidoreductase subunit I">
    <location>
        <begin position="1"/>
        <end position="162"/>
    </location>
</feature>
<feature type="domain" description="4Fe-4S ferredoxin-type 1" evidence="1">
    <location>
        <begin position="54"/>
        <end position="83"/>
    </location>
</feature>
<feature type="domain" description="4Fe-4S ferredoxin-type 2" evidence="1">
    <location>
        <begin position="93"/>
        <end position="122"/>
    </location>
</feature>
<feature type="binding site" evidence="1">
    <location>
        <position position="63"/>
    </location>
    <ligand>
        <name>[4Fe-4S] cluster</name>
        <dbReference type="ChEBI" id="CHEBI:49883"/>
        <label>1</label>
    </ligand>
</feature>
<feature type="binding site" evidence="1">
    <location>
        <position position="66"/>
    </location>
    <ligand>
        <name>[4Fe-4S] cluster</name>
        <dbReference type="ChEBI" id="CHEBI:49883"/>
        <label>1</label>
    </ligand>
</feature>
<feature type="binding site" evidence="1">
    <location>
        <position position="69"/>
    </location>
    <ligand>
        <name>[4Fe-4S] cluster</name>
        <dbReference type="ChEBI" id="CHEBI:49883"/>
        <label>1</label>
    </ligand>
</feature>
<feature type="binding site" evidence="1">
    <location>
        <position position="73"/>
    </location>
    <ligand>
        <name>[4Fe-4S] cluster</name>
        <dbReference type="ChEBI" id="CHEBI:49883"/>
        <label>2</label>
    </ligand>
</feature>
<feature type="binding site" evidence="1">
    <location>
        <position position="102"/>
    </location>
    <ligand>
        <name>[4Fe-4S] cluster</name>
        <dbReference type="ChEBI" id="CHEBI:49883"/>
        <label>2</label>
    </ligand>
</feature>
<feature type="binding site" evidence="1">
    <location>
        <position position="105"/>
    </location>
    <ligand>
        <name>[4Fe-4S] cluster</name>
        <dbReference type="ChEBI" id="CHEBI:49883"/>
        <label>2</label>
    </ligand>
</feature>
<feature type="binding site" evidence="1">
    <location>
        <position position="108"/>
    </location>
    <ligand>
        <name>[4Fe-4S] cluster</name>
        <dbReference type="ChEBI" id="CHEBI:49883"/>
        <label>2</label>
    </ligand>
</feature>
<feature type="binding site" evidence="1">
    <location>
        <position position="112"/>
    </location>
    <ligand>
        <name>[4Fe-4S] cluster</name>
        <dbReference type="ChEBI" id="CHEBI:49883"/>
        <label>1</label>
    </ligand>
</feature>
<organism>
    <name type="scientific">Burkholderia pseudomallei (strain 1106a)</name>
    <dbReference type="NCBI Taxonomy" id="357348"/>
    <lineage>
        <taxon>Bacteria</taxon>
        <taxon>Pseudomonadati</taxon>
        <taxon>Pseudomonadota</taxon>
        <taxon>Betaproteobacteria</taxon>
        <taxon>Burkholderiales</taxon>
        <taxon>Burkholderiaceae</taxon>
        <taxon>Burkholderia</taxon>
        <taxon>pseudomallei group</taxon>
    </lineage>
</organism>
<proteinExistence type="inferred from homology"/>
<gene>
    <name evidence="1" type="primary">nuoI</name>
    <name type="ordered locus">BURPS1106A_1307</name>
</gene>
<name>NUOI_BURP0</name>